<accession>Q4V7E1</accession>
<evidence type="ECO:0000250" key="1"/>
<evidence type="ECO:0000250" key="2">
    <source>
        <dbReference type="UniProtKB" id="P78545"/>
    </source>
</evidence>
<evidence type="ECO:0000250" key="3">
    <source>
        <dbReference type="UniProtKB" id="Q3UPW2"/>
    </source>
</evidence>
<evidence type="ECO:0000255" key="4"/>
<evidence type="ECO:0000255" key="5">
    <source>
        <dbReference type="PROSITE-ProRule" id="PRU00237"/>
    </source>
</evidence>
<evidence type="ECO:0000255" key="6">
    <source>
        <dbReference type="PROSITE-ProRule" id="PRU00762"/>
    </source>
</evidence>
<evidence type="ECO:0000256" key="7">
    <source>
        <dbReference type="SAM" id="MobiDB-lite"/>
    </source>
</evidence>
<evidence type="ECO:0000312" key="8">
    <source>
        <dbReference type="EMBL" id="AAH97980.1"/>
    </source>
</evidence>
<comment type="function">
    <text evidence="2 3">Transcriptional activator that binds and transactivates ETS sequences containing the consensus nucleotide core sequence GGA[AT]. Acts synergistically with POU2F3 to transactivate the SPRR2A promoter and with RUNX1 to transactivate the ANGPT1 promoter. Also transactivates collagenase, CCL20, CLND7, FLG, KRT8, NOS2, PTGS2, SPRR2B, TGFBR2 and TGM3 promoters. Represses KRT4 promoter activity. Involved in mediating vascular inflammation. May play an important role in epithelial cell differentiation and tumorigenesis. May be a critical downstream effector of the ERBB2 signaling pathway. May be associated with mammary gland development and involution. Plays an important role in the regulation of transcription with TATA-less promoters in preimplantation embryos, which is essential in preimplantation development (By similarity).</text>
</comment>
<comment type="subunit">
    <text evidence="2">Interacts with TBP. Interacts with CREBBP and EP300; these act as transcriptional coactivators of ELF3 and positively modulate its function. Interacts with XRCC5/KU86 and XRCC6/KU70; these inhibit the ability of ELF3 to bind DNA and negatively modulate its transcriptional activity. Associated with CLND7 and POU2F3 (By similarity). Interacts with ZNF768 (By similarity).</text>
</comment>
<comment type="subcellular location">
    <subcellularLocation>
        <location evidence="1">Cytoplasm</location>
    </subcellularLocation>
    <subcellularLocation>
        <location evidence="2 5">Nucleus</location>
    </subcellularLocation>
</comment>
<comment type="similarity">
    <text evidence="4">Belongs to the ETS family.</text>
</comment>
<feature type="chain" id="PRO_0000287683" description="ETS-related transcription factor Elf-3">
    <location>
        <begin position="1"/>
        <end position="395"/>
    </location>
</feature>
<feature type="domain" description="PNT" evidence="6">
    <location>
        <begin position="69"/>
        <end position="155"/>
    </location>
</feature>
<feature type="DNA-binding region" description="ETS" evidence="5">
    <location>
        <begin position="297"/>
        <end position="379"/>
    </location>
</feature>
<feature type="region of interest" description="Disordered" evidence="7">
    <location>
        <begin position="200"/>
        <end position="275"/>
    </location>
</feature>
<feature type="compositionally biased region" description="Low complexity" evidence="7">
    <location>
        <begin position="200"/>
        <end position="240"/>
    </location>
</feature>
<feature type="compositionally biased region" description="Basic and acidic residues" evidence="7">
    <location>
        <begin position="246"/>
        <end position="265"/>
    </location>
</feature>
<feature type="compositionally biased region" description="Basic residues" evidence="7">
    <location>
        <begin position="266"/>
        <end position="275"/>
    </location>
</feature>
<sequence length="395" mass="44521">MAATCEISNVFSNYFNAMYSSEDPTLAPAPLTTFGTEDFVLTLNNQHMSPEGPVGCVGPQTRSQRDRTEPPAVLHLAEKASWTGERPQFWSKTQVLDWISYQVEKNKYDASSIDFSRCDMDGATLCNCALEELRLVFGPLGDQLHAQLRDLTSSSSDELSWIIELLEKDGMTFQEGLGDSGPFDQGSPFAQELLDDGRQASPYYGSSYGPGAPSPGSSDFSTSGTDTPQSSHSSDSGGSDVDLDLTDSKVFPRDGFPDYKKGEPKHGKRKRGRPRKLSKEYWDCLEGKKSKHAPRGTHLWEFIRDILIHPELNEGLMKWENRHEGVFKFLRSEAVAQLWGQKKKNSNMTYEKLSRAMRYYYKREILERVDGRRLVYKFGKNSSGWKEEEVGESQN</sequence>
<dbReference type="EMBL" id="BC097980">
    <property type="protein sequence ID" value="AAH97980.1"/>
    <property type="molecule type" value="mRNA"/>
</dbReference>
<dbReference type="RefSeq" id="NP_001019939.1">
    <property type="nucleotide sequence ID" value="NM_001024768.1"/>
</dbReference>
<dbReference type="SMR" id="Q4V7E1"/>
<dbReference type="FunCoup" id="Q4V7E1">
    <property type="interactions" value="70"/>
</dbReference>
<dbReference type="STRING" id="10116.ENSRNOP00000008753"/>
<dbReference type="iPTMnet" id="Q4V7E1"/>
<dbReference type="PhosphoSitePlus" id="Q4V7E1"/>
<dbReference type="PaxDb" id="10116-ENSRNOP00000008753"/>
<dbReference type="GeneID" id="304815"/>
<dbReference type="KEGG" id="rno:304815"/>
<dbReference type="UCSC" id="RGD:1310687">
    <property type="organism name" value="rat"/>
</dbReference>
<dbReference type="AGR" id="RGD:1310687"/>
<dbReference type="CTD" id="1999"/>
<dbReference type="RGD" id="1310687">
    <property type="gene designation" value="Elf3"/>
</dbReference>
<dbReference type="VEuPathDB" id="HostDB:ENSRNOG00000006330"/>
<dbReference type="eggNOG" id="KOG3804">
    <property type="taxonomic scope" value="Eukaryota"/>
</dbReference>
<dbReference type="HOGENOM" id="CLU_048172_0_0_1"/>
<dbReference type="InParanoid" id="Q4V7E1"/>
<dbReference type="OrthoDB" id="5961210at2759"/>
<dbReference type="PhylomeDB" id="Q4V7E1"/>
<dbReference type="TreeFam" id="TF318679"/>
<dbReference type="Reactome" id="R-RNO-1912408">
    <property type="pathway name" value="Pre-NOTCH Transcription and Translation"/>
</dbReference>
<dbReference type="PRO" id="PR:Q4V7E1"/>
<dbReference type="Proteomes" id="UP000002494">
    <property type="component" value="Chromosome 13"/>
</dbReference>
<dbReference type="Bgee" id="ENSRNOG00000006330">
    <property type="expression patterns" value="Expressed in stomach and 15 other cell types or tissues"/>
</dbReference>
<dbReference type="GO" id="GO:0005737">
    <property type="term" value="C:cytoplasm"/>
    <property type="evidence" value="ECO:0007669"/>
    <property type="project" value="UniProtKB-SubCell"/>
</dbReference>
<dbReference type="GO" id="GO:0005634">
    <property type="term" value="C:nucleus"/>
    <property type="evidence" value="ECO:0000318"/>
    <property type="project" value="GO_Central"/>
</dbReference>
<dbReference type="GO" id="GO:0003677">
    <property type="term" value="F:DNA binding"/>
    <property type="evidence" value="ECO:0000266"/>
    <property type="project" value="RGD"/>
</dbReference>
<dbReference type="GO" id="GO:0001228">
    <property type="term" value="F:DNA-binding transcription activator activity, RNA polymerase II-specific"/>
    <property type="evidence" value="ECO:0000266"/>
    <property type="project" value="RGD"/>
</dbReference>
<dbReference type="GO" id="GO:0003700">
    <property type="term" value="F:DNA-binding transcription factor activity"/>
    <property type="evidence" value="ECO:0000266"/>
    <property type="project" value="RGD"/>
</dbReference>
<dbReference type="GO" id="GO:0000981">
    <property type="term" value="F:DNA-binding transcription factor activity, RNA polymerase II-specific"/>
    <property type="evidence" value="ECO:0000318"/>
    <property type="project" value="GO_Central"/>
</dbReference>
<dbReference type="GO" id="GO:0000978">
    <property type="term" value="F:RNA polymerase II cis-regulatory region sequence-specific DNA binding"/>
    <property type="evidence" value="ECO:0000266"/>
    <property type="project" value="RGD"/>
</dbReference>
<dbReference type="GO" id="GO:1990837">
    <property type="term" value="F:sequence-specific double-stranded DNA binding"/>
    <property type="evidence" value="ECO:0000266"/>
    <property type="project" value="RGD"/>
</dbReference>
<dbReference type="GO" id="GO:0009653">
    <property type="term" value="P:anatomical structure morphogenesis"/>
    <property type="evidence" value="ECO:0000266"/>
    <property type="project" value="RGD"/>
</dbReference>
<dbReference type="GO" id="GO:0001824">
    <property type="term" value="P:blastocyst development"/>
    <property type="evidence" value="ECO:0000266"/>
    <property type="project" value="RGD"/>
</dbReference>
<dbReference type="GO" id="GO:0030154">
    <property type="term" value="P:cell differentiation"/>
    <property type="evidence" value="ECO:0000318"/>
    <property type="project" value="GO_Central"/>
</dbReference>
<dbReference type="GO" id="GO:0030198">
    <property type="term" value="P:extracellular matrix organization"/>
    <property type="evidence" value="ECO:0000266"/>
    <property type="project" value="RGD"/>
</dbReference>
<dbReference type="GO" id="GO:0006954">
    <property type="term" value="P:inflammatory response"/>
    <property type="evidence" value="ECO:0000266"/>
    <property type="project" value="RGD"/>
</dbReference>
<dbReference type="GO" id="GO:0060056">
    <property type="term" value="P:mammary gland involution"/>
    <property type="evidence" value="ECO:0000266"/>
    <property type="project" value="RGD"/>
</dbReference>
<dbReference type="GO" id="GO:0045892">
    <property type="term" value="P:negative regulation of DNA-templated transcription"/>
    <property type="evidence" value="ECO:0000266"/>
    <property type="project" value="RGD"/>
</dbReference>
<dbReference type="GO" id="GO:0045944">
    <property type="term" value="P:positive regulation of transcription by RNA polymerase II"/>
    <property type="evidence" value="ECO:0000266"/>
    <property type="project" value="RGD"/>
</dbReference>
<dbReference type="GO" id="GO:0006355">
    <property type="term" value="P:regulation of DNA-templated transcription"/>
    <property type="evidence" value="ECO:0000266"/>
    <property type="project" value="RGD"/>
</dbReference>
<dbReference type="GO" id="GO:0006357">
    <property type="term" value="P:regulation of transcription by RNA polymerase II"/>
    <property type="evidence" value="ECO:0000318"/>
    <property type="project" value="GO_Central"/>
</dbReference>
<dbReference type="CDD" id="cd08537">
    <property type="entry name" value="SAM_PNT-ESE-1-like"/>
    <property type="match status" value="1"/>
</dbReference>
<dbReference type="FunFam" id="1.10.10.10:FF:000136">
    <property type="entry name" value="ETS homologous factor isoform X1"/>
    <property type="match status" value="1"/>
</dbReference>
<dbReference type="FunFam" id="1.10.150.50:FF:000063">
    <property type="entry name" value="ETS-related transcription factor Elf-3 isoform X1"/>
    <property type="match status" value="1"/>
</dbReference>
<dbReference type="Gene3D" id="1.10.150.50">
    <property type="entry name" value="Transcription Factor, Ets-1"/>
    <property type="match status" value="1"/>
</dbReference>
<dbReference type="Gene3D" id="1.10.10.10">
    <property type="entry name" value="Winged helix-like DNA-binding domain superfamily/Winged helix DNA-binding domain"/>
    <property type="match status" value="1"/>
</dbReference>
<dbReference type="InterPro" id="IPR042693">
    <property type="entry name" value="Elf-3_PNT"/>
</dbReference>
<dbReference type="InterPro" id="IPR000418">
    <property type="entry name" value="Ets_dom"/>
</dbReference>
<dbReference type="InterPro" id="IPR046328">
    <property type="entry name" value="ETS_fam"/>
</dbReference>
<dbReference type="InterPro" id="IPR003118">
    <property type="entry name" value="Pointed_dom"/>
</dbReference>
<dbReference type="InterPro" id="IPR013761">
    <property type="entry name" value="SAM/pointed_sf"/>
</dbReference>
<dbReference type="InterPro" id="IPR036388">
    <property type="entry name" value="WH-like_DNA-bd_sf"/>
</dbReference>
<dbReference type="InterPro" id="IPR036390">
    <property type="entry name" value="WH_DNA-bd_sf"/>
</dbReference>
<dbReference type="PANTHER" id="PTHR11849">
    <property type="entry name" value="ETS"/>
    <property type="match status" value="1"/>
</dbReference>
<dbReference type="PANTHER" id="PTHR11849:SF13">
    <property type="entry name" value="ETS-RELATED TRANSCRIPTION FACTOR ELF-3"/>
    <property type="match status" value="1"/>
</dbReference>
<dbReference type="Pfam" id="PF00178">
    <property type="entry name" value="Ets"/>
    <property type="match status" value="1"/>
</dbReference>
<dbReference type="Pfam" id="PF02198">
    <property type="entry name" value="SAM_PNT"/>
    <property type="match status" value="1"/>
</dbReference>
<dbReference type="PRINTS" id="PR00454">
    <property type="entry name" value="ETSDOMAIN"/>
</dbReference>
<dbReference type="SMART" id="SM00413">
    <property type="entry name" value="ETS"/>
    <property type="match status" value="1"/>
</dbReference>
<dbReference type="SMART" id="SM00251">
    <property type="entry name" value="SAM_PNT"/>
    <property type="match status" value="1"/>
</dbReference>
<dbReference type="SUPFAM" id="SSF47769">
    <property type="entry name" value="SAM/Pointed domain"/>
    <property type="match status" value="1"/>
</dbReference>
<dbReference type="SUPFAM" id="SSF46785">
    <property type="entry name" value="Winged helix' DNA-binding domain"/>
    <property type="match status" value="1"/>
</dbReference>
<dbReference type="PROSITE" id="PS50061">
    <property type="entry name" value="ETS_DOMAIN_3"/>
    <property type="match status" value="1"/>
</dbReference>
<dbReference type="PROSITE" id="PS51433">
    <property type="entry name" value="PNT"/>
    <property type="match status" value="1"/>
</dbReference>
<protein>
    <recommendedName>
        <fullName>ETS-related transcription factor Elf-3</fullName>
    </recommendedName>
    <alternativeName>
        <fullName>E74-like factor 3</fullName>
    </alternativeName>
</protein>
<gene>
    <name evidence="8" type="primary">Elf3</name>
</gene>
<proteinExistence type="evidence at transcript level"/>
<organism>
    <name type="scientific">Rattus norvegicus</name>
    <name type="common">Rat</name>
    <dbReference type="NCBI Taxonomy" id="10116"/>
    <lineage>
        <taxon>Eukaryota</taxon>
        <taxon>Metazoa</taxon>
        <taxon>Chordata</taxon>
        <taxon>Craniata</taxon>
        <taxon>Vertebrata</taxon>
        <taxon>Euteleostomi</taxon>
        <taxon>Mammalia</taxon>
        <taxon>Eutheria</taxon>
        <taxon>Euarchontoglires</taxon>
        <taxon>Glires</taxon>
        <taxon>Rodentia</taxon>
        <taxon>Myomorpha</taxon>
        <taxon>Muroidea</taxon>
        <taxon>Muridae</taxon>
        <taxon>Murinae</taxon>
        <taxon>Rattus</taxon>
    </lineage>
</organism>
<keyword id="KW-0010">Activator</keyword>
<keyword id="KW-0963">Cytoplasm</keyword>
<keyword id="KW-0217">Developmental protein</keyword>
<keyword id="KW-0221">Differentiation</keyword>
<keyword id="KW-0238">DNA-binding</keyword>
<keyword id="KW-0395">Inflammatory response</keyword>
<keyword id="KW-0539">Nucleus</keyword>
<keyword id="KW-1185">Reference proteome</keyword>
<keyword id="KW-0678">Repressor</keyword>
<keyword id="KW-0804">Transcription</keyword>
<keyword id="KW-0805">Transcription regulation</keyword>
<name>ELF3_RAT</name>
<reference evidence="8" key="1">
    <citation type="journal article" date="2004" name="Genome Res.">
        <title>The status, quality, and expansion of the NIH full-length cDNA project: the Mammalian Gene Collection (MGC).</title>
        <authorList>
            <consortium name="The MGC Project Team"/>
        </authorList>
    </citation>
    <scope>NUCLEOTIDE SEQUENCE [LARGE SCALE MRNA]</scope>
    <source>
        <tissue evidence="8">Placenta</tissue>
    </source>
</reference>